<accession>Q1BHF2</accession>
<sequence>MHDKILILDFGSQVTQLIARRVREAHVYCEIHPNDVSDDFVREFAPKAVILSGSHASTYEDHQLRAPQAVWDLGVPVLGICYGMQTMAVQLGGKVEWSDHREFGYAEMRAHGHTRLLDGIEDFTTAEGHGMLKVWMSHGDKVAELPPGFALMASTPSCPIAGMADEARGYYAVQFHPEVTHTVKGRQIIERFVLQIAGAKPDWIMKNHIEEAVAKIREQVGDEEVILGLSGGVDSSVAAALIHRAIGDQLTCVFVDHGLLRLNEGKMVLDMFEGRLHAKVVHVDASDQFLGHLAGVTDPEAKRKIIGREFVEVFQAEAKKLSKAKWLAQGTIYPDVVESGGTKTKKATTIKSHHNVGGLPETLGLKLLEPLRDLFKDEVRELGVALGLPPEMVYRHPFPGPGLGVRILGEVKREYAELLRRADAIFIEELRNTTATAQDAAAGLCGEADVGKSWYDLTSQAFAVFLPVKSVGVMGDGRTYDYVTSLRAVQTTDFMTAHWAHLPYALLGRASNRIINEVRGINRVVYDISGKPPATIEWE</sequence>
<organism>
    <name type="scientific">Burkholderia orbicola (strain AU 1054)</name>
    <dbReference type="NCBI Taxonomy" id="331271"/>
    <lineage>
        <taxon>Bacteria</taxon>
        <taxon>Pseudomonadati</taxon>
        <taxon>Pseudomonadota</taxon>
        <taxon>Betaproteobacteria</taxon>
        <taxon>Burkholderiales</taxon>
        <taxon>Burkholderiaceae</taxon>
        <taxon>Burkholderia</taxon>
        <taxon>Burkholderia cepacia complex</taxon>
        <taxon>Burkholderia orbicola</taxon>
    </lineage>
</organism>
<comment type="function">
    <text evidence="1">Catalyzes the synthesis of GMP from XMP.</text>
</comment>
<comment type="catalytic activity">
    <reaction evidence="1">
        <text>XMP + L-glutamine + ATP + H2O = GMP + L-glutamate + AMP + diphosphate + 2 H(+)</text>
        <dbReference type="Rhea" id="RHEA:11680"/>
        <dbReference type="ChEBI" id="CHEBI:15377"/>
        <dbReference type="ChEBI" id="CHEBI:15378"/>
        <dbReference type="ChEBI" id="CHEBI:29985"/>
        <dbReference type="ChEBI" id="CHEBI:30616"/>
        <dbReference type="ChEBI" id="CHEBI:33019"/>
        <dbReference type="ChEBI" id="CHEBI:57464"/>
        <dbReference type="ChEBI" id="CHEBI:58115"/>
        <dbReference type="ChEBI" id="CHEBI:58359"/>
        <dbReference type="ChEBI" id="CHEBI:456215"/>
        <dbReference type="EC" id="6.3.5.2"/>
    </reaction>
</comment>
<comment type="pathway">
    <text evidence="1">Purine metabolism; GMP biosynthesis; GMP from XMP (L-Gln route): step 1/1.</text>
</comment>
<comment type="subunit">
    <text evidence="1">Homodimer.</text>
</comment>
<name>GUAA_BURO1</name>
<evidence type="ECO:0000255" key="1">
    <source>
        <dbReference type="HAMAP-Rule" id="MF_00344"/>
    </source>
</evidence>
<dbReference type="EC" id="6.3.5.2" evidence="1"/>
<dbReference type="EMBL" id="CP000380">
    <property type="protein sequence ID" value="ABF80953.1"/>
    <property type="molecule type" value="Genomic_DNA"/>
</dbReference>
<dbReference type="SMR" id="Q1BHF2"/>
<dbReference type="MEROPS" id="C26.957"/>
<dbReference type="HOGENOM" id="CLU_014340_0_5_4"/>
<dbReference type="UniPathway" id="UPA00189">
    <property type="reaction ID" value="UER00296"/>
</dbReference>
<dbReference type="GO" id="GO:0005829">
    <property type="term" value="C:cytosol"/>
    <property type="evidence" value="ECO:0007669"/>
    <property type="project" value="TreeGrafter"/>
</dbReference>
<dbReference type="GO" id="GO:0005524">
    <property type="term" value="F:ATP binding"/>
    <property type="evidence" value="ECO:0007669"/>
    <property type="project" value="UniProtKB-UniRule"/>
</dbReference>
<dbReference type="GO" id="GO:0003921">
    <property type="term" value="F:GMP synthase activity"/>
    <property type="evidence" value="ECO:0007669"/>
    <property type="project" value="InterPro"/>
</dbReference>
<dbReference type="CDD" id="cd01742">
    <property type="entry name" value="GATase1_GMP_Synthase"/>
    <property type="match status" value="1"/>
</dbReference>
<dbReference type="CDD" id="cd01997">
    <property type="entry name" value="GMP_synthase_C"/>
    <property type="match status" value="1"/>
</dbReference>
<dbReference type="FunFam" id="3.30.300.10:FF:000002">
    <property type="entry name" value="GMP synthase [glutamine-hydrolyzing]"/>
    <property type="match status" value="1"/>
</dbReference>
<dbReference type="FunFam" id="3.40.50.620:FF:000001">
    <property type="entry name" value="GMP synthase [glutamine-hydrolyzing]"/>
    <property type="match status" value="1"/>
</dbReference>
<dbReference type="FunFam" id="3.40.50.880:FF:000001">
    <property type="entry name" value="GMP synthase [glutamine-hydrolyzing]"/>
    <property type="match status" value="1"/>
</dbReference>
<dbReference type="Gene3D" id="3.30.300.10">
    <property type="match status" value="1"/>
</dbReference>
<dbReference type="Gene3D" id="3.40.50.880">
    <property type="match status" value="1"/>
</dbReference>
<dbReference type="Gene3D" id="3.40.50.620">
    <property type="entry name" value="HUPs"/>
    <property type="match status" value="1"/>
</dbReference>
<dbReference type="HAMAP" id="MF_00344">
    <property type="entry name" value="GMP_synthase"/>
    <property type="match status" value="1"/>
</dbReference>
<dbReference type="InterPro" id="IPR029062">
    <property type="entry name" value="Class_I_gatase-like"/>
</dbReference>
<dbReference type="InterPro" id="IPR017926">
    <property type="entry name" value="GATASE"/>
</dbReference>
<dbReference type="InterPro" id="IPR001674">
    <property type="entry name" value="GMP_synth_C"/>
</dbReference>
<dbReference type="InterPro" id="IPR004739">
    <property type="entry name" value="GMP_synth_GATase"/>
</dbReference>
<dbReference type="InterPro" id="IPR022955">
    <property type="entry name" value="GMP_synthase"/>
</dbReference>
<dbReference type="InterPro" id="IPR025777">
    <property type="entry name" value="GMPS_ATP_PPase_dom"/>
</dbReference>
<dbReference type="InterPro" id="IPR022310">
    <property type="entry name" value="NAD/GMP_synthase"/>
</dbReference>
<dbReference type="InterPro" id="IPR014729">
    <property type="entry name" value="Rossmann-like_a/b/a_fold"/>
</dbReference>
<dbReference type="NCBIfam" id="TIGR00884">
    <property type="entry name" value="guaA_Cterm"/>
    <property type="match status" value="1"/>
</dbReference>
<dbReference type="NCBIfam" id="TIGR00888">
    <property type="entry name" value="guaA_Nterm"/>
    <property type="match status" value="1"/>
</dbReference>
<dbReference type="NCBIfam" id="NF000848">
    <property type="entry name" value="PRK00074.1"/>
    <property type="match status" value="1"/>
</dbReference>
<dbReference type="PANTHER" id="PTHR11922:SF2">
    <property type="entry name" value="GMP SYNTHASE [GLUTAMINE-HYDROLYZING]"/>
    <property type="match status" value="1"/>
</dbReference>
<dbReference type="PANTHER" id="PTHR11922">
    <property type="entry name" value="GMP SYNTHASE-RELATED"/>
    <property type="match status" value="1"/>
</dbReference>
<dbReference type="Pfam" id="PF00117">
    <property type="entry name" value="GATase"/>
    <property type="match status" value="1"/>
</dbReference>
<dbReference type="Pfam" id="PF00958">
    <property type="entry name" value="GMP_synt_C"/>
    <property type="match status" value="1"/>
</dbReference>
<dbReference type="Pfam" id="PF02540">
    <property type="entry name" value="NAD_synthase"/>
    <property type="match status" value="1"/>
</dbReference>
<dbReference type="SUPFAM" id="SSF52402">
    <property type="entry name" value="Adenine nucleotide alpha hydrolases-like"/>
    <property type="match status" value="1"/>
</dbReference>
<dbReference type="SUPFAM" id="SSF52317">
    <property type="entry name" value="Class I glutamine amidotransferase-like"/>
    <property type="match status" value="1"/>
</dbReference>
<dbReference type="SUPFAM" id="SSF54810">
    <property type="entry name" value="GMP synthetase C-terminal dimerisation domain"/>
    <property type="match status" value="1"/>
</dbReference>
<dbReference type="PROSITE" id="PS51273">
    <property type="entry name" value="GATASE_TYPE_1"/>
    <property type="match status" value="1"/>
</dbReference>
<dbReference type="PROSITE" id="PS51553">
    <property type="entry name" value="GMPS_ATP_PPASE"/>
    <property type="match status" value="1"/>
</dbReference>
<proteinExistence type="inferred from homology"/>
<protein>
    <recommendedName>
        <fullName evidence="1">GMP synthase [glutamine-hydrolyzing]</fullName>
        <ecNumber evidence="1">6.3.5.2</ecNumber>
    </recommendedName>
    <alternativeName>
        <fullName evidence="1">GMP synthetase</fullName>
    </alternativeName>
    <alternativeName>
        <fullName evidence="1">Glutamine amidotransferase</fullName>
    </alternativeName>
</protein>
<reference key="1">
    <citation type="submission" date="2006-05" db="EMBL/GenBank/DDBJ databases">
        <title>Complete sequence of chromosome 3 of Burkholderia cenocepacia AU 1054.</title>
        <authorList>
            <consortium name="US DOE Joint Genome Institute"/>
            <person name="Copeland A."/>
            <person name="Lucas S."/>
            <person name="Lapidus A."/>
            <person name="Barry K."/>
            <person name="Detter J.C."/>
            <person name="Glavina del Rio T."/>
            <person name="Hammon N."/>
            <person name="Israni S."/>
            <person name="Dalin E."/>
            <person name="Tice H."/>
            <person name="Pitluck S."/>
            <person name="Chain P."/>
            <person name="Malfatti S."/>
            <person name="Shin M."/>
            <person name="Vergez L."/>
            <person name="Schmutz J."/>
            <person name="Larimer F."/>
            <person name="Land M."/>
            <person name="Hauser L."/>
            <person name="Kyrpides N."/>
            <person name="Lykidis A."/>
            <person name="LiPuma J.J."/>
            <person name="Konstantinidis K."/>
            <person name="Tiedje J.M."/>
            <person name="Richardson P."/>
        </authorList>
    </citation>
    <scope>NUCLEOTIDE SEQUENCE [LARGE SCALE GENOMIC DNA]</scope>
    <source>
        <strain>AU 1054</strain>
    </source>
</reference>
<feature type="chain" id="PRO_1000120230" description="GMP synthase [glutamine-hydrolyzing]">
    <location>
        <begin position="1"/>
        <end position="539"/>
    </location>
</feature>
<feature type="domain" description="Glutamine amidotransferase type-1" evidence="1">
    <location>
        <begin position="4"/>
        <end position="202"/>
    </location>
</feature>
<feature type="domain" description="GMPS ATP-PPase" evidence="1">
    <location>
        <begin position="203"/>
        <end position="395"/>
    </location>
</feature>
<feature type="active site" description="Nucleophile" evidence="1">
    <location>
        <position position="81"/>
    </location>
</feature>
<feature type="active site" evidence="1">
    <location>
        <position position="176"/>
    </location>
</feature>
<feature type="active site" evidence="1">
    <location>
        <position position="178"/>
    </location>
</feature>
<feature type="binding site" evidence="1">
    <location>
        <begin position="230"/>
        <end position="236"/>
    </location>
    <ligand>
        <name>ATP</name>
        <dbReference type="ChEBI" id="CHEBI:30616"/>
    </ligand>
</feature>
<keyword id="KW-0067">ATP-binding</keyword>
<keyword id="KW-0315">Glutamine amidotransferase</keyword>
<keyword id="KW-0332">GMP biosynthesis</keyword>
<keyword id="KW-0436">Ligase</keyword>
<keyword id="KW-0547">Nucleotide-binding</keyword>
<keyword id="KW-0658">Purine biosynthesis</keyword>
<gene>
    <name evidence="1" type="primary">guaA</name>
    <name type="ordered locus">Bcen_6088</name>
</gene>